<protein>
    <recommendedName>
        <fullName>Serine/threonine-protein kinase greatwall</fullName>
        <shortName>GW</shortName>
        <shortName>GWL</shortName>
        <shortName>hGWL</shortName>
        <ecNumber evidence="14">2.7.11.1</ecNumber>
    </recommendedName>
    <alternativeName>
        <fullName>Microtubule-associated serine/threonine-protein kinase-like</fullName>
        <shortName>MAST-L</shortName>
    </alternativeName>
</protein>
<keyword id="KW-0002">3D-structure</keyword>
<keyword id="KW-0007">Acetylation</keyword>
<keyword id="KW-0025">Alternative splicing</keyword>
<keyword id="KW-0067">ATP-binding</keyword>
<keyword id="KW-0131">Cell cycle</keyword>
<keyword id="KW-0132">Cell division</keyword>
<keyword id="KW-0963">Cytoplasm</keyword>
<keyword id="KW-0206">Cytoskeleton</keyword>
<keyword id="KW-0225">Disease variant</keyword>
<keyword id="KW-0418">Kinase</keyword>
<keyword id="KW-0498">Mitosis</keyword>
<keyword id="KW-0547">Nucleotide-binding</keyword>
<keyword id="KW-0539">Nucleus</keyword>
<keyword id="KW-0597">Phosphoprotein</keyword>
<keyword id="KW-1267">Proteomics identification</keyword>
<keyword id="KW-1185">Reference proteome</keyword>
<keyword id="KW-0723">Serine/threonine-protein kinase</keyword>
<keyword id="KW-0808">Transferase</keyword>
<sequence>MDPTAGSKKEPGGGAATEEGVNRIAVPKPPSIEEFSIVKPISRGAFGKVYLGQKGGKLYAVKVVKKADMINKNMTHQVQAERDALALSKSPFIVHLYYSLQSANNVYLVMEYLIGGDVKSLLHIYGYFDEEMAVKYISEVALALDYLHRHGIIHRDLKPDNMLISNEGHIKLTDFGLSKVTLNRDINMMDILTTPSMAKPRQDYSRTPGQVLSLISSLGFNTPIAEKNQDPANILSACLSETSQLSQGLVCPMSVDQKDTTPYSSKLLKSCLETVASNPGMPVKCLTSNLLQSRKRLATSSASSQSHTFISSVESECHSSPKWEKDCQESDEALGPTMMSWNAVEKLCAKSANAIETKGFNKKDLELALSPIHNSSALPTTGRSCVNLAKKCFSGEVSWEAVELDVNNINMDTDTSQLGFHQSNQWAVDSGGISEEHLGKRSLKRNFELVDSSPCKKIIQNKKTCVEYKHNEMTNCYTNQNTGLTVEVQDLKLSVHKSQQNDCANKENIVNSFTDKQQTPEKLPIPMIAKNLMCELDEDCEKNSKRDYLSSSFLCSDDDRASKNISMNSDSSFPGISIMESPLESQPLDSDRSIKESSFEESNIEDPLIVTPDCQEKTSPKGVENPAVQESNQKMLGPPLEVLKTLASKRNAVAFRSFNSHINASNNSEPSRMNMTSLDAMDISCAYSGSYPMAITPTQKRRSCMPHQQTPNQIKSGTPYRTPKSVRRGVAPVDDGRILGTPDYLAPELLLGRAHGPAVDWWALGVCLFEFLTGIPPFNDETPQQVFQNILKRDIPWPEGEEKLSDNAQSAVEILLTIDDTKRAGMKELKRHPLFSDVDWENLQHQTMPFIPQPDDETDTSYFEARNTAQHLTVSGFSL</sequence>
<gene>
    <name type="primary">MASTL</name>
    <name type="synonym">GW</name>
    <name type="synonym">GWL</name>
    <name type="synonym">THC2</name>
</gene>
<organism>
    <name type="scientific">Homo sapiens</name>
    <name type="common">Human</name>
    <dbReference type="NCBI Taxonomy" id="9606"/>
    <lineage>
        <taxon>Eukaryota</taxon>
        <taxon>Metazoa</taxon>
        <taxon>Chordata</taxon>
        <taxon>Craniata</taxon>
        <taxon>Vertebrata</taxon>
        <taxon>Euteleostomi</taxon>
        <taxon>Mammalia</taxon>
        <taxon>Eutheria</taxon>
        <taxon>Euarchontoglires</taxon>
        <taxon>Primates</taxon>
        <taxon>Haplorrhini</taxon>
        <taxon>Catarrhini</taxon>
        <taxon>Hominidae</taxon>
        <taxon>Homo</taxon>
    </lineage>
</organism>
<name>GWL_HUMAN</name>
<dbReference type="EC" id="2.7.11.1" evidence="14"/>
<dbReference type="EMBL" id="AK027719">
    <property type="protein sequence ID" value="BAB55321.1"/>
    <property type="molecule type" value="mRNA"/>
</dbReference>
<dbReference type="EMBL" id="AK074804">
    <property type="protein sequence ID" value="BAC11218.1"/>
    <property type="molecule type" value="mRNA"/>
</dbReference>
<dbReference type="EMBL" id="AL160291">
    <property type="status" value="NOT_ANNOTATED_CDS"/>
    <property type="molecule type" value="Genomic_DNA"/>
</dbReference>
<dbReference type="EMBL" id="BC009107">
    <property type="protein sequence ID" value="AAH09107.1"/>
    <property type="molecule type" value="mRNA"/>
</dbReference>
<dbReference type="CCDS" id="CCDS53502.1">
    <molecule id="Q96GX5-1"/>
</dbReference>
<dbReference type="CCDS" id="CCDS53503.1">
    <molecule id="Q96GX5-2"/>
</dbReference>
<dbReference type="CCDS" id="CCDS7153.1">
    <molecule id="Q96GX5-3"/>
</dbReference>
<dbReference type="RefSeq" id="NP_001165774.1">
    <molecule id="Q96GX5-1"/>
    <property type="nucleotide sequence ID" value="NM_001172303.3"/>
</dbReference>
<dbReference type="RefSeq" id="NP_001165775.1">
    <molecule id="Q96GX5-2"/>
    <property type="nucleotide sequence ID" value="NM_001172304.3"/>
</dbReference>
<dbReference type="RefSeq" id="NP_116233.2">
    <molecule id="Q96GX5-3"/>
    <property type="nucleotide sequence ID" value="NM_032844.5"/>
</dbReference>
<dbReference type="PDB" id="5LOH">
    <property type="method" value="X-ray"/>
    <property type="resolution" value="3.10 A"/>
    <property type="chains" value="A/B=1-194, A/B=740-879"/>
</dbReference>
<dbReference type="PDB" id="8V5H">
    <property type="method" value="X-ray"/>
    <property type="resolution" value="2.74 A"/>
    <property type="chains" value="A=1-195, A=738-879"/>
</dbReference>
<dbReference type="PDBsum" id="5LOH"/>
<dbReference type="PDBsum" id="8V5H"/>
<dbReference type="SMR" id="Q96GX5"/>
<dbReference type="BioGRID" id="124364">
    <property type="interactions" value="67"/>
</dbReference>
<dbReference type="FunCoup" id="Q96GX5">
    <property type="interactions" value="2609"/>
</dbReference>
<dbReference type="IntAct" id="Q96GX5">
    <property type="interactions" value="34"/>
</dbReference>
<dbReference type="MINT" id="Q96GX5"/>
<dbReference type="STRING" id="9606.ENSP00000365107"/>
<dbReference type="BindingDB" id="Q96GX5"/>
<dbReference type="ChEMBL" id="CHEMBL4105826"/>
<dbReference type="GlyGen" id="Q96GX5">
    <property type="glycosylation" value="4 sites, 1 O-linked glycan (4 sites)"/>
</dbReference>
<dbReference type="iPTMnet" id="Q96GX5"/>
<dbReference type="PhosphoSitePlus" id="Q96GX5"/>
<dbReference type="BioMuta" id="MASTL"/>
<dbReference type="DMDM" id="68565604"/>
<dbReference type="jPOST" id="Q96GX5"/>
<dbReference type="MassIVE" id="Q96GX5"/>
<dbReference type="PaxDb" id="9606-ENSP00000365107"/>
<dbReference type="PeptideAtlas" id="Q96GX5"/>
<dbReference type="ProteomicsDB" id="76677">
    <molecule id="Q96GX5-1"/>
</dbReference>
<dbReference type="ProteomicsDB" id="76678">
    <molecule id="Q96GX5-2"/>
</dbReference>
<dbReference type="ProteomicsDB" id="76679">
    <molecule id="Q96GX5-3"/>
</dbReference>
<dbReference type="Pumba" id="Q96GX5"/>
<dbReference type="Antibodypedia" id="12704">
    <property type="antibodies" value="344 antibodies from 33 providers"/>
</dbReference>
<dbReference type="DNASU" id="84930"/>
<dbReference type="Ensembl" id="ENST00000342386.10">
    <molecule id="Q96GX5-2"/>
    <property type="protein sequence ID" value="ENSP00000343446.5"/>
    <property type="gene ID" value="ENSG00000120539.15"/>
</dbReference>
<dbReference type="Ensembl" id="ENST00000375940.9">
    <molecule id="Q96GX5-1"/>
    <property type="protein sequence ID" value="ENSP00000365107.5"/>
    <property type="gene ID" value="ENSG00000120539.15"/>
</dbReference>
<dbReference type="Ensembl" id="ENST00000375946.8">
    <molecule id="Q96GX5-3"/>
    <property type="protein sequence ID" value="ENSP00000365113.4"/>
    <property type="gene ID" value="ENSG00000120539.15"/>
</dbReference>
<dbReference type="GeneID" id="84930"/>
<dbReference type="KEGG" id="hsa:84930"/>
<dbReference type="MANE-Select" id="ENST00000375940.9">
    <property type="protein sequence ID" value="ENSP00000365107.5"/>
    <property type="RefSeq nucleotide sequence ID" value="NM_001172303.3"/>
    <property type="RefSeq protein sequence ID" value="NP_001165774.1"/>
</dbReference>
<dbReference type="UCSC" id="uc001itl.3">
    <molecule id="Q96GX5-1"/>
    <property type="organism name" value="human"/>
</dbReference>
<dbReference type="AGR" id="HGNC:19042"/>
<dbReference type="CTD" id="84930"/>
<dbReference type="DisGeNET" id="84930"/>
<dbReference type="GeneCards" id="MASTL"/>
<dbReference type="HGNC" id="HGNC:19042">
    <property type="gene designation" value="MASTL"/>
</dbReference>
<dbReference type="HPA" id="ENSG00000120539">
    <property type="expression patterns" value="Tissue enhanced (bone)"/>
</dbReference>
<dbReference type="MalaCards" id="MASTL"/>
<dbReference type="MIM" id="608221">
    <property type="type" value="gene"/>
</dbReference>
<dbReference type="neXtProt" id="NX_Q96GX5"/>
<dbReference type="OpenTargets" id="ENSG00000120539"/>
<dbReference type="Orphanet" id="168629">
    <property type="disease" value="Autosomal thrombocytopenia with normal platelets"/>
</dbReference>
<dbReference type="PharmGKB" id="PA134943781"/>
<dbReference type="VEuPathDB" id="HostDB:ENSG00000120539"/>
<dbReference type="eggNOG" id="KOG0606">
    <property type="taxonomic scope" value="Eukaryota"/>
</dbReference>
<dbReference type="GeneTree" id="ENSGT00940000157002"/>
<dbReference type="HOGENOM" id="CLU_016048_0_0_1"/>
<dbReference type="InParanoid" id="Q96GX5"/>
<dbReference type="OMA" id="VMKKNEM"/>
<dbReference type="OrthoDB" id="162894at2759"/>
<dbReference type="PAN-GO" id="Q96GX5">
    <property type="GO annotations" value="4 GO annotations based on evolutionary models"/>
</dbReference>
<dbReference type="PhylomeDB" id="Q96GX5"/>
<dbReference type="TreeFam" id="TF313149"/>
<dbReference type="PathwayCommons" id="Q96GX5"/>
<dbReference type="Reactome" id="R-HSA-2465910">
    <property type="pathway name" value="MASTL Facilitates Mitotic Progression"/>
</dbReference>
<dbReference type="SignaLink" id="Q96GX5"/>
<dbReference type="SIGNOR" id="Q96GX5"/>
<dbReference type="BioGRID-ORCS" id="84930">
    <property type="hits" value="769 hits in 1145 CRISPR screens"/>
</dbReference>
<dbReference type="ChiTaRS" id="MASTL">
    <property type="organism name" value="human"/>
</dbReference>
<dbReference type="GeneWiki" id="MASTL"/>
<dbReference type="GenomeRNAi" id="84930"/>
<dbReference type="Pharos" id="Q96GX5">
    <property type="development level" value="Tbio"/>
</dbReference>
<dbReference type="PRO" id="PR:Q96GX5"/>
<dbReference type="Proteomes" id="UP000005640">
    <property type="component" value="Chromosome 10"/>
</dbReference>
<dbReference type="RNAct" id="Q96GX5">
    <property type="molecule type" value="protein"/>
</dbReference>
<dbReference type="Bgee" id="ENSG00000120539">
    <property type="expression patterns" value="Expressed in secondary oocyte and 152 other cell types or tissues"/>
</dbReference>
<dbReference type="ExpressionAtlas" id="Q96GX5">
    <property type="expression patterns" value="baseline and differential"/>
</dbReference>
<dbReference type="GO" id="GO:0005813">
    <property type="term" value="C:centrosome"/>
    <property type="evidence" value="ECO:0000314"/>
    <property type="project" value="UniProtKB"/>
</dbReference>
<dbReference type="GO" id="GO:0032154">
    <property type="term" value="C:cleavage furrow"/>
    <property type="evidence" value="ECO:0000314"/>
    <property type="project" value="UniProtKB"/>
</dbReference>
<dbReference type="GO" id="GO:0005737">
    <property type="term" value="C:cytoplasm"/>
    <property type="evidence" value="ECO:0007669"/>
    <property type="project" value="UniProtKB-KW"/>
</dbReference>
<dbReference type="GO" id="GO:0043231">
    <property type="term" value="C:intracellular membrane-bounded organelle"/>
    <property type="evidence" value="ECO:0000314"/>
    <property type="project" value="HPA"/>
</dbReference>
<dbReference type="GO" id="GO:0005654">
    <property type="term" value="C:nucleoplasm"/>
    <property type="evidence" value="ECO:0000314"/>
    <property type="project" value="HPA"/>
</dbReference>
<dbReference type="GO" id="GO:0005634">
    <property type="term" value="C:nucleus"/>
    <property type="evidence" value="ECO:0000314"/>
    <property type="project" value="UniProtKB"/>
</dbReference>
<dbReference type="GO" id="GO:0005524">
    <property type="term" value="F:ATP binding"/>
    <property type="evidence" value="ECO:0007669"/>
    <property type="project" value="UniProtKB-KW"/>
</dbReference>
<dbReference type="GO" id="GO:0016301">
    <property type="term" value="F:kinase activity"/>
    <property type="evidence" value="ECO:0000314"/>
    <property type="project" value="UniProtKB"/>
</dbReference>
<dbReference type="GO" id="GO:0051721">
    <property type="term" value="F:protein phosphatase 2A binding"/>
    <property type="evidence" value="ECO:0000250"/>
    <property type="project" value="UniProtKB"/>
</dbReference>
<dbReference type="GO" id="GO:0106310">
    <property type="term" value="F:protein serine kinase activity"/>
    <property type="evidence" value="ECO:0007669"/>
    <property type="project" value="RHEA"/>
</dbReference>
<dbReference type="GO" id="GO:0004674">
    <property type="term" value="F:protein serine/threonine kinase activity"/>
    <property type="evidence" value="ECO:0000314"/>
    <property type="project" value="UniProtKB"/>
</dbReference>
<dbReference type="GO" id="GO:0044325">
    <property type="term" value="F:transmembrane transporter binding"/>
    <property type="evidence" value="ECO:0007669"/>
    <property type="project" value="Ensembl"/>
</dbReference>
<dbReference type="GO" id="GO:0051301">
    <property type="term" value="P:cell division"/>
    <property type="evidence" value="ECO:0007669"/>
    <property type="project" value="UniProtKB-KW"/>
</dbReference>
<dbReference type="GO" id="GO:0006974">
    <property type="term" value="P:DNA damage response"/>
    <property type="evidence" value="ECO:0000250"/>
    <property type="project" value="UniProtKB"/>
</dbReference>
<dbReference type="GO" id="GO:0007147">
    <property type="term" value="P:female meiosis II"/>
    <property type="evidence" value="ECO:0007669"/>
    <property type="project" value="Ensembl"/>
</dbReference>
<dbReference type="GO" id="GO:0000086">
    <property type="term" value="P:G2/M transition of mitotic cell cycle"/>
    <property type="evidence" value="ECO:0000315"/>
    <property type="project" value="UniProtKB"/>
</dbReference>
<dbReference type="GO" id="GO:0035556">
    <property type="term" value="P:intracellular signal transduction"/>
    <property type="evidence" value="ECO:0000318"/>
    <property type="project" value="GO_Central"/>
</dbReference>
<dbReference type="GO" id="GO:0051726">
    <property type="term" value="P:regulation of cell cycle"/>
    <property type="evidence" value="ECO:0000315"/>
    <property type="project" value="UniProtKB"/>
</dbReference>
<dbReference type="GO" id="GO:0007346">
    <property type="term" value="P:regulation of mitotic cell cycle"/>
    <property type="evidence" value="ECO:0000304"/>
    <property type="project" value="Reactome"/>
</dbReference>
<dbReference type="CDD" id="cd05610">
    <property type="entry name" value="STKc_MASTL"/>
    <property type="match status" value="1"/>
</dbReference>
<dbReference type="DisProt" id="DP03037"/>
<dbReference type="FunFam" id="1.10.510.10:FF:000278">
    <property type="entry name" value="serine/threonine-protein kinase greatwall isoform X1"/>
    <property type="match status" value="1"/>
</dbReference>
<dbReference type="FunFam" id="1.10.510.10:FF:001219">
    <property type="entry name" value="serine/threonine-protein kinase greatwall isoform X1"/>
    <property type="match status" value="1"/>
</dbReference>
<dbReference type="FunFam" id="3.30.200.20:FF:000277">
    <property type="entry name" value="serine/threonine-protein kinase greatwall isoform X1"/>
    <property type="match status" value="1"/>
</dbReference>
<dbReference type="Gene3D" id="3.30.200.20">
    <property type="entry name" value="Phosphorylase Kinase, domain 1"/>
    <property type="match status" value="2"/>
</dbReference>
<dbReference type="Gene3D" id="1.10.510.10">
    <property type="entry name" value="Transferase(Phosphotransferase) domain 1"/>
    <property type="match status" value="2"/>
</dbReference>
<dbReference type="InterPro" id="IPR000961">
    <property type="entry name" value="AGC-kinase_C"/>
</dbReference>
<dbReference type="InterPro" id="IPR011009">
    <property type="entry name" value="Kinase-like_dom_sf"/>
</dbReference>
<dbReference type="InterPro" id="IPR037638">
    <property type="entry name" value="MASTL_STKc"/>
</dbReference>
<dbReference type="InterPro" id="IPR000719">
    <property type="entry name" value="Prot_kinase_dom"/>
</dbReference>
<dbReference type="InterPro" id="IPR008271">
    <property type="entry name" value="Ser/Thr_kinase_AS"/>
</dbReference>
<dbReference type="InterPro" id="IPR050236">
    <property type="entry name" value="Ser_Thr_kinase_AGC"/>
</dbReference>
<dbReference type="PANTHER" id="PTHR24356">
    <property type="entry name" value="SERINE/THREONINE-PROTEIN KINASE"/>
    <property type="match status" value="1"/>
</dbReference>
<dbReference type="PANTHER" id="PTHR24356:SF1">
    <property type="entry name" value="SERINE_THREONINE-PROTEIN KINASE GREATWALL"/>
    <property type="match status" value="1"/>
</dbReference>
<dbReference type="Pfam" id="PF00069">
    <property type="entry name" value="Pkinase"/>
    <property type="match status" value="2"/>
</dbReference>
<dbReference type="SMART" id="SM00220">
    <property type="entry name" value="S_TKc"/>
    <property type="match status" value="1"/>
</dbReference>
<dbReference type="SUPFAM" id="SSF56112">
    <property type="entry name" value="Protein kinase-like (PK-like)"/>
    <property type="match status" value="1"/>
</dbReference>
<dbReference type="PROSITE" id="PS51285">
    <property type="entry name" value="AGC_KINASE_CTER"/>
    <property type="match status" value="1"/>
</dbReference>
<dbReference type="PROSITE" id="PS50011">
    <property type="entry name" value="PROTEIN_KINASE_DOM"/>
    <property type="match status" value="1"/>
</dbReference>
<dbReference type="PROSITE" id="PS00108">
    <property type="entry name" value="PROTEIN_KINASE_ST"/>
    <property type="match status" value="1"/>
</dbReference>
<feature type="chain" id="PRO_0000086315" description="Serine/threonine-protein kinase greatwall">
    <location>
        <begin position="1"/>
        <end position="879"/>
    </location>
</feature>
<feature type="domain" description="Protein kinase" evidence="2">
    <location>
        <begin position="35"/>
        <end position="835"/>
    </location>
</feature>
<feature type="domain" description="AGC-kinase C-terminal" evidence="3">
    <location>
        <begin position="836"/>
        <end position="879"/>
    </location>
</feature>
<feature type="region of interest" description="Disordered" evidence="5">
    <location>
        <begin position="1"/>
        <end position="23"/>
    </location>
</feature>
<feature type="region of interest" description="Disordered" evidence="5">
    <location>
        <begin position="566"/>
        <end position="632"/>
    </location>
</feature>
<feature type="region of interest" description="Disordered" evidence="5">
    <location>
        <begin position="700"/>
        <end position="728"/>
    </location>
</feature>
<feature type="compositionally biased region" description="Basic and acidic residues" evidence="5">
    <location>
        <begin position="589"/>
        <end position="598"/>
    </location>
</feature>
<feature type="compositionally biased region" description="Polar residues" evidence="5">
    <location>
        <begin position="706"/>
        <end position="716"/>
    </location>
</feature>
<feature type="active site" description="Proton acceptor" evidence="2 4">
    <location>
        <position position="156"/>
    </location>
</feature>
<feature type="binding site" evidence="2">
    <location>
        <begin position="41"/>
        <end position="49"/>
    </location>
    <ligand>
        <name>ATP</name>
        <dbReference type="ChEBI" id="CHEBI:30616"/>
    </ligand>
</feature>
<feature type="binding site" evidence="2">
    <location>
        <position position="62"/>
    </location>
    <ligand>
        <name>ATP</name>
        <dbReference type="ChEBI" id="CHEBI:30616"/>
    </ligand>
</feature>
<feature type="modified residue" description="N-acetylmethionine" evidence="22">
    <location>
        <position position="1"/>
    </location>
</feature>
<feature type="modified residue" description="Phosphothreonine" evidence="21">
    <location>
        <position position="207"/>
    </location>
</feature>
<feature type="modified residue" description="Phosphothreonine" evidence="21">
    <location>
        <position position="222"/>
    </location>
</feature>
<feature type="modified residue" description="Phosphoserine" evidence="19">
    <location>
        <position position="293"/>
    </location>
</feature>
<feature type="modified residue" description="Phosphoserine" evidence="18 19 20 21 23">
    <location>
        <position position="370"/>
    </location>
</feature>
<feature type="modified residue" description="Phosphoserine" evidence="23">
    <location>
        <position position="453"/>
    </location>
</feature>
<feature type="modified residue" description="Phosphothreonine" evidence="23">
    <location>
        <position position="519"/>
    </location>
</feature>
<feature type="modified residue" description="Phosphoserine" evidence="19">
    <location>
        <position position="552"/>
    </location>
</feature>
<feature type="modified residue" description="Phosphoserine" evidence="19">
    <location>
        <position position="556"/>
    </location>
</feature>
<feature type="modified residue" description="Phosphoserine" evidence="17 21">
    <location>
        <position position="631"/>
    </location>
</feature>
<feature type="modified residue" description="Phosphoserine" evidence="20 23">
    <location>
        <position position="657"/>
    </location>
</feature>
<feature type="modified residue" description="Phosphoserine" evidence="21">
    <location>
        <position position="668"/>
    </location>
</feature>
<feature type="modified residue" description="Phosphothreonine" evidence="19">
    <location>
        <position position="722"/>
    </location>
</feature>
<feature type="modified residue" description="Phosphoserine" evidence="19">
    <location>
        <position position="725"/>
    </location>
</feature>
<feature type="modified residue" description="Phosphothreonine" evidence="19">
    <location>
        <position position="741"/>
    </location>
</feature>
<feature type="modified residue" description="Phosphoserine" evidence="19 21">
    <location>
        <position position="875"/>
    </location>
</feature>
<feature type="modified residue" description="Phosphoserine" evidence="19 20 21 23">
    <location>
        <position position="878"/>
    </location>
</feature>
<feature type="splice variant" id="VSP_014574" description="In isoform 2 and isoform 3." evidence="15">
    <location>
        <position position="708"/>
    </location>
</feature>
<feature type="splice variant" id="VSP_014575" description="In isoform 2." evidence="15">
    <location>
        <begin position="756"/>
        <end position="793"/>
    </location>
</feature>
<feature type="sequence variant" id="VAR_022838" description="Found in a large family with autosomal dominant thrombocytopenia; uncertain significance; no effect on nuclear localization; dbSNP:rs28941470." evidence="6 8">
    <original>E</original>
    <variation>D</variation>
    <location>
        <position position="167"/>
    </location>
</feature>
<feature type="sequence variant" id="VAR_040792" description="In dbSNP:rs36121140." evidence="7">
    <original>T</original>
    <variation>K</variation>
    <location>
        <position position="337"/>
    </location>
</feature>
<feature type="sequence variant" id="VAR_057103" description="In dbSNP:rs35413630.">
    <original>D</original>
    <variation>Y</variation>
    <location>
        <position position="606"/>
    </location>
</feature>
<feature type="sequence variant" id="VAR_040793" description="In dbSNP:rs35571315." evidence="7">
    <original>V</original>
    <variation>I</variation>
    <location>
        <position position="610"/>
    </location>
</feature>
<feature type="sequence variant" id="VAR_022839" description="In dbSNP:rs3802526." evidence="7">
    <original>P</original>
    <variation>A</variation>
    <location>
        <position position="620"/>
    </location>
</feature>
<feature type="mutagenesis site" description="Hyperactive form." evidence="13">
    <original>K</original>
    <variation>M</variation>
    <location>
        <position position="72"/>
    </location>
</feature>
<feature type="sequence conflict" description="In Ref. 1; BAC11218." evidence="16" ref="1">
    <original>K</original>
    <variation>E</variation>
    <location>
        <position position="634"/>
    </location>
</feature>
<feature type="sequence conflict" description="In Ref. 1; BAB55321." evidence="16" ref="1">
    <original>C</original>
    <variation>R</variation>
    <location>
        <position position="685"/>
    </location>
</feature>
<feature type="sequence conflict" description="In Ref. 1; BAC11218." evidence="16" ref="1">
    <original>A</original>
    <variation>P</variation>
    <location>
        <position position="731"/>
    </location>
</feature>
<feature type="sequence conflict" description="In Ref. 1; BAB55321." evidence="16" ref="1">
    <original>A</original>
    <variation>T</variation>
    <location>
        <position position="865"/>
    </location>
</feature>
<feature type="helix" evidence="24">
    <location>
        <begin position="32"/>
        <end position="34"/>
    </location>
</feature>
<feature type="strand" evidence="24">
    <location>
        <begin position="35"/>
        <end position="40"/>
    </location>
</feature>
<feature type="strand" evidence="24">
    <location>
        <begin position="48"/>
        <end position="56"/>
    </location>
</feature>
<feature type="strand" evidence="24">
    <location>
        <begin position="58"/>
        <end position="65"/>
    </location>
</feature>
<feature type="turn" evidence="24">
    <location>
        <begin position="66"/>
        <end position="68"/>
    </location>
</feature>
<feature type="strand" evidence="24">
    <location>
        <begin position="96"/>
        <end position="98"/>
    </location>
</feature>
<feature type="strand" evidence="24">
    <location>
        <begin position="103"/>
        <end position="111"/>
    </location>
</feature>
<feature type="helix" evidence="24">
    <location>
        <begin position="118"/>
        <end position="125"/>
    </location>
</feature>
<feature type="helix" evidence="24">
    <location>
        <begin position="130"/>
        <end position="149"/>
    </location>
</feature>
<feature type="turn" evidence="24">
    <location>
        <begin position="159"/>
        <end position="161"/>
    </location>
</feature>
<feature type="strand" evidence="24">
    <location>
        <begin position="162"/>
        <end position="164"/>
    </location>
</feature>
<feature type="strand" evidence="24">
    <location>
        <begin position="170"/>
        <end position="172"/>
    </location>
</feature>
<feature type="strand" evidence="24">
    <location>
        <begin position="174"/>
        <end position="177"/>
    </location>
</feature>
<feature type="helix" evidence="24">
    <location>
        <begin position="200"/>
        <end position="203"/>
    </location>
</feature>
<feature type="helix" evidence="24">
    <location>
        <begin position="758"/>
        <end position="773"/>
    </location>
</feature>
<feature type="helix" evidence="24">
    <location>
        <begin position="783"/>
        <end position="792"/>
    </location>
</feature>
<feature type="helix" evidence="24">
    <location>
        <begin position="800"/>
        <end position="802"/>
    </location>
</feature>
<feature type="helix" evidence="24">
    <location>
        <begin position="806"/>
        <end position="815"/>
    </location>
</feature>
<feature type="helix" evidence="24">
    <location>
        <begin position="826"/>
        <end position="830"/>
    </location>
</feature>
<feature type="helix" evidence="24">
    <location>
        <begin position="833"/>
        <end position="835"/>
    </location>
</feature>
<feature type="helix" evidence="24">
    <location>
        <begin position="840"/>
        <end position="845"/>
    </location>
</feature>
<reference key="1">
    <citation type="journal article" date="2004" name="Nat. Genet.">
        <title>Complete sequencing and characterization of 21,243 full-length human cDNAs.</title>
        <authorList>
            <person name="Ota T."/>
            <person name="Suzuki Y."/>
            <person name="Nishikawa T."/>
            <person name="Otsuki T."/>
            <person name="Sugiyama T."/>
            <person name="Irie R."/>
            <person name="Wakamatsu A."/>
            <person name="Hayashi K."/>
            <person name="Sato H."/>
            <person name="Nagai K."/>
            <person name="Kimura K."/>
            <person name="Makita H."/>
            <person name="Sekine M."/>
            <person name="Obayashi M."/>
            <person name="Nishi T."/>
            <person name="Shibahara T."/>
            <person name="Tanaka T."/>
            <person name="Ishii S."/>
            <person name="Yamamoto J."/>
            <person name="Saito K."/>
            <person name="Kawai Y."/>
            <person name="Isono Y."/>
            <person name="Nakamura Y."/>
            <person name="Nagahari K."/>
            <person name="Murakami K."/>
            <person name="Yasuda T."/>
            <person name="Iwayanagi T."/>
            <person name="Wagatsuma M."/>
            <person name="Shiratori A."/>
            <person name="Sudo H."/>
            <person name="Hosoiri T."/>
            <person name="Kaku Y."/>
            <person name="Kodaira H."/>
            <person name="Kondo H."/>
            <person name="Sugawara M."/>
            <person name="Takahashi M."/>
            <person name="Kanda K."/>
            <person name="Yokoi T."/>
            <person name="Furuya T."/>
            <person name="Kikkawa E."/>
            <person name="Omura Y."/>
            <person name="Abe K."/>
            <person name="Kamihara K."/>
            <person name="Katsuta N."/>
            <person name="Sato K."/>
            <person name="Tanikawa M."/>
            <person name="Yamazaki M."/>
            <person name="Ninomiya K."/>
            <person name="Ishibashi T."/>
            <person name="Yamashita H."/>
            <person name="Murakawa K."/>
            <person name="Fujimori K."/>
            <person name="Tanai H."/>
            <person name="Kimata M."/>
            <person name="Watanabe M."/>
            <person name="Hiraoka S."/>
            <person name="Chiba Y."/>
            <person name="Ishida S."/>
            <person name="Ono Y."/>
            <person name="Takiguchi S."/>
            <person name="Watanabe S."/>
            <person name="Yosida M."/>
            <person name="Hotuta T."/>
            <person name="Kusano J."/>
            <person name="Kanehori K."/>
            <person name="Takahashi-Fujii A."/>
            <person name="Hara H."/>
            <person name="Tanase T.-O."/>
            <person name="Nomura Y."/>
            <person name="Togiya S."/>
            <person name="Komai F."/>
            <person name="Hara R."/>
            <person name="Takeuchi K."/>
            <person name="Arita M."/>
            <person name="Imose N."/>
            <person name="Musashino K."/>
            <person name="Yuuki H."/>
            <person name="Oshima A."/>
            <person name="Sasaki N."/>
            <person name="Aotsuka S."/>
            <person name="Yoshikawa Y."/>
            <person name="Matsunawa H."/>
            <person name="Ichihara T."/>
            <person name="Shiohata N."/>
            <person name="Sano S."/>
            <person name="Moriya S."/>
            <person name="Momiyama H."/>
            <person name="Satoh N."/>
            <person name="Takami S."/>
            <person name="Terashima Y."/>
            <person name="Suzuki O."/>
            <person name="Nakagawa S."/>
            <person name="Senoh A."/>
            <person name="Mizoguchi H."/>
            <person name="Goto Y."/>
            <person name="Shimizu F."/>
            <person name="Wakebe H."/>
            <person name="Hishigaki H."/>
            <person name="Watanabe T."/>
            <person name="Sugiyama A."/>
            <person name="Takemoto M."/>
            <person name="Kawakami B."/>
            <person name="Yamazaki M."/>
            <person name="Watanabe K."/>
            <person name="Kumagai A."/>
            <person name="Itakura S."/>
            <person name="Fukuzumi Y."/>
            <person name="Fujimori Y."/>
            <person name="Komiyama M."/>
            <person name="Tashiro H."/>
            <person name="Tanigami A."/>
            <person name="Fujiwara T."/>
            <person name="Ono T."/>
            <person name="Yamada K."/>
            <person name="Fujii Y."/>
            <person name="Ozaki K."/>
            <person name="Hirao M."/>
            <person name="Ohmori Y."/>
            <person name="Kawabata A."/>
            <person name="Hikiji T."/>
            <person name="Kobatake N."/>
            <person name="Inagaki H."/>
            <person name="Ikema Y."/>
            <person name="Okamoto S."/>
            <person name="Okitani R."/>
            <person name="Kawakami T."/>
            <person name="Noguchi S."/>
            <person name="Itoh T."/>
            <person name="Shigeta K."/>
            <person name="Senba T."/>
            <person name="Matsumura K."/>
            <person name="Nakajima Y."/>
            <person name="Mizuno T."/>
            <person name="Morinaga M."/>
            <person name="Sasaki M."/>
            <person name="Togashi T."/>
            <person name="Oyama M."/>
            <person name="Hata H."/>
            <person name="Watanabe M."/>
            <person name="Komatsu T."/>
            <person name="Mizushima-Sugano J."/>
            <person name="Satoh T."/>
            <person name="Shirai Y."/>
            <person name="Takahashi Y."/>
            <person name="Nakagawa K."/>
            <person name="Okumura K."/>
            <person name="Nagase T."/>
            <person name="Nomura N."/>
            <person name="Kikuchi H."/>
            <person name="Masuho Y."/>
            <person name="Yamashita R."/>
            <person name="Nakai K."/>
            <person name="Yada T."/>
            <person name="Nakamura Y."/>
            <person name="Ohara O."/>
            <person name="Isogai T."/>
            <person name="Sugano S."/>
        </authorList>
    </citation>
    <scope>NUCLEOTIDE SEQUENCE [LARGE SCALE MRNA] (ISOFORMS 2 AND 3)</scope>
</reference>
<reference key="2">
    <citation type="journal article" date="2004" name="Nature">
        <title>The DNA sequence and comparative analysis of human chromosome 10.</title>
        <authorList>
            <person name="Deloukas P."/>
            <person name="Earthrowl M.E."/>
            <person name="Grafham D.V."/>
            <person name="Rubenfield M."/>
            <person name="French L."/>
            <person name="Steward C.A."/>
            <person name="Sims S.K."/>
            <person name="Jones M.C."/>
            <person name="Searle S."/>
            <person name="Scott C."/>
            <person name="Howe K."/>
            <person name="Hunt S.E."/>
            <person name="Andrews T.D."/>
            <person name="Gilbert J.G.R."/>
            <person name="Swarbreck D."/>
            <person name="Ashurst J.L."/>
            <person name="Taylor A."/>
            <person name="Battles J."/>
            <person name="Bird C.P."/>
            <person name="Ainscough R."/>
            <person name="Almeida J.P."/>
            <person name="Ashwell R.I.S."/>
            <person name="Ambrose K.D."/>
            <person name="Babbage A.K."/>
            <person name="Bagguley C.L."/>
            <person name="Bailey J."/>
            <person name="Banerjee R."/>
            <person name="Bates K."/>
            <person name="Beasley H."/>
            <person name="Bray-Allen S."/>
            <person name="Brown A.J."/>
            <person name="Brown J.Y."/>
            <person name="Burford D.C."/>
            <person name="Burrill W."/>
            <person name="Burton J."/>
            <person name="Cahill P."/>
            <person name="Camire D."/>
            <person name="Carter N.P."/>
            <person name="Chapman J.C."/>
            <person name="Clark S.Y."/>
            <person name="Clarke G."/>
            <person name="Clee C.M."/>
            <person name="Clegg S."/>
            <person name="Corby N."/>
            <person name="Coulson A."/>
            <person name="Dhami P."/>
            <person name="Dutta I."/>
            <person name="Dunn M."/>
            <person name="Faulkner L."/>
            <person name="Frankish A."/>
            <person name="Frankland J.A."/>
            <person name="Garner P."/>
            <person name="Garnett J."/>
            <person name="Gribble S."/>
            <person name="Griffiths C."/>
            <person name="Grocock R."/>
            <person name="Gustafson E."/>
            <person name="Hammond S."/>
            <person name="Harley J.L."/>
            <person name="Hart E."/>
            <person name="Heath P.D."/>
            <person name="Ho T.P."/>
            <person name="Hopkins B."/>
            <person name="Horne J."/>
            <person name="Howden P.J."/>
            <person name="Huckle E."/>
            <person name="Hynds C."/>
            <person name="Johnson C."/>
            <person name="Johnson D."/>
            <person name="Kana A."/>
            <person name="Kay M."/>
            <person name="Kimberley A.M."/>
            <person name="Kershaw J.K."/>
            <person name="Kokkinaki M."/>
            <person name="Laird G.K."/>
            <person name="Lawlor S."/>
            <person name="Lee H.M."/>
            <person name="Leongamornlert D.A."/>
            <person name="Laird G."/>
            <person name="Lloyd C."/>
            <person name="Lloyd D.M."/>
            <person name="Loveland J."/>
            <person name="Lovell J."/>
            <person name="McLaren S."/>
            <person name="McLay K.E."/>
            <person name="McMurray A."/>
            <person name="Mashreghi-Mohammadi M."/>
            <person name="Matthews L."/>
            <person name="Milne S."/>
            <person name="Nickerson T."/>
            <person name="Nguyen M."/>
            <person name="Overton-Larty E."/>
            <person name="Palmer S.A."/>
            <person name="Pearce A.V."/>
            <person name="Peck A.I."/>
            <person name="Pelan S."/>
            <person name="Phillimore B."/>
            <person name="Porter K."/>
            <person name="Rice C.M."/>
            <person name="Rogosin A."/>
            <person name="Ross M.T."/>
            <person name="Sarafidou T."/>
            <person name="Sehra H.K."/>
            <person name="Shownkeen R."/>
            <person name="Skuce C.D."/>
            <person name="Smith M."/>
            <person name="Standring L."/>
            <person name="Sycamore N."/>
            <person name="Tester J."/>
            <person name="Thorpe A."/>
            <person name="Torcasso W."/>
            <person name="Tracey A."/>
            <person name="Tromans A."/>
            <person name="Tsolas J."/>
            <person name="Wall M."/>
            <person name="Walsh J."/>
            <person name="Wang H."/>
            <person name="Weinstock K."/>
            <person name="West A.P."/>
            <person name="Willey D.L."/>
            <person name="Whitehead S.L."/>
            <person name="Wilming L."/>
            <person name="Wray P.W."/>
            <person name="Young L."/>
            <person name="Chen Y."/>
            <person name="Lovering R.C."/>
            <person name="Moschonas N.K."/>
            <person name="Siebert R."/>
            <person name="Fechtel K."/>
            <person name="Bentley D."/>
            <person name="Durbin R.M."/>
            <person name="Hubbard T."/>
            <person name="Doucette-Stamm L."/>
            <person name="Beck S."/>
            <person name="Smith D.R."/>
            <person name="Rogers J."/>
        </authorList>
    </citation>
    <scope>NUCLEOTIDE SEQUENCE [LARGE SCALE GENOMIC DNA]</scope>
</reference>
<reference key="3">
    <citation type="journal article" date="2004" name="Genome Res.">
        <title>The status, quality, and expansion of the NIH full-length cDNA project: the Mammalian Gene Collection (MGC).</title>
        <authorList>
            <consortium name="The MGC Project Team"/>
        </authorList>
    </citation>
    <scope>NUCLEOTIDE SEQUENCE [LARGE SCALE MRNA] (ISOFORM 1)</scope>
    <source>
        <tissue>Placenta</tissue>
    </source>
</reference>
<reference key="4">
    <citation type="journal article" date="2006" name="Nat. Biotechnol.">
        <title>A probability-based approach for high-throughput protein phosphorylation analysis and site localization.</title>
        <authorList>
            <person name="Beausoleil S.A."/>
            <person name="Villen J."/>
            <person name="Gerber S.A."/>
            <person name="Rush J."/>
            <person name="Gygi S.P."/>
        </authorList>
    </citation>
    <scope>PHOSPHORYLATION [LARGE SCALE ANALYSIS] AT SER-631</scope>
    <scope>IDENTIFICATION BY MASS SPECTROMETRY [LARGE SCALE ANALYSIS]</scope>
    <source>
        <tissue>Cervix carcinoma</tissue>
    </source>
</reference>
<reference key="5">
    <citation type="journal article" date="2008" name="J. Proteome Res.">
        <title>Combining protein-based IMAC, peptide-based IMAC, and MudPIT for efficient phosphoproteomic analysis.</title>
        <authorList>
            <person name="Cantin G.T."/>
            <person name="Yi W."/>
            <person name="Lu B."/>
            <person name="Park S.K."/>
            <person name="Xu T."/>
            <person name="Lee J.-D."/>
            <person name="Yates J.R. III"/>
        </authorList>
    </citation>
    <scope>PHOSPHORYLATION [LARGE SCALE ANALYSIS] AT SER-370</scope>
    <scope>IDENTIFICATION BY MASS SPECTROMETRY [LARGE SCALE ANALYSIS]</scope>
    <source>
        <tissue>Cervix carcinoma</tissue>
    </source>
</reference>
<reference key="6">
    <citation type="journal article" date="2008" name="Mol. Cell">
        <title>Kinase-selective enrichment enables quantitative phosphoproteomics of the kinome across the cell cycle.</title>
        <authorList>
            <person name="Daub H."/>
            <person name="Olsen J.V."/>
            <person name="Bairlein M."/>
            <person name="Gnad F."/>
            <person name="Oppermann F.S."/>
            <person name="Korner R."/>
            <person name="Greff Z."/>
            <person name="Keri G."/>
            <person name="Stemmann O."/>
            <person name="Mann M."/>
        </authorList>
    </citation>
    <scope>PHOSPHORYLATION [LARGE SCALE ANALYSIS] AT SER-370; SER-657 AND SER-878</scope>
    <scope>IDENTIFICATION BY MASS SPECTROMETRY [LARGE SCALE ANALYSIS]</scope>
    <source>
        <tissue>Cervix carcinoma</tissue>
    </source>
</reference>
<reference key="7">
    <citation type="journal article" date="2008" name="Proc. Natl. Acad. Sci. U.S.A.">
        <title>A quantitative atlas of mitotic phosphorylation.</title>
        <authorList>
            <person name="Dephoure N."/>
            <person name="Zhou C."/>
            <person name="Villen J."/>
            <person name="Beausoleil S.A."/>
            <person name="Bakalarski C.E."/>
            <person name="Elledge S.J."/>
            <person name="Gygi S.P."/>
        </authorList>
    </citation>
    <scope>PHOSPHORYLATION [LARGE SCALE ANALYSIS] AT SER-293; SER-370; SER-552; SER-556; THR-722; SER-725; THR-741; SER-875 AND SER-878</scope>
    <scope>IDENTIFICATION BY MASS SPECTROMETRY [LARGE SCALE ANALYSIS]</scope>
    <source>
        <tissue>Cervix carcinoma</tissue>
    </source>
</reference>
<reference key="8">
    <citation type="journal article" date="2009" name="EMBO J.">
        <title>Greatwall maintains mitosis through regulation of PP2A.</title>
        <authorList>
            <person name="Vigneron S."/>
            <person name="Brioudes E."/>
            <person name="Burgess A."/>
            <person name="Labbe J.C."/>
            <person name="Lorca T."/>
            <person name="Castro A."/>
        </authorList>
    </citation>
    <scope>FUNCTION</scope>
</reference>
<reference key="9">
    <citation type="journal article" date="2009" name="Exp. Hematol.">
        <title>In vivo inactivation of MASTL kinase results in thrombocytopenia.</title>
        <authorList>
            <person name="Johnson H.J."/>
            <person name="Gandhi M.J."/>
            <person name="Shafizadeh E."/>
            <person name="Langer N.B."/>
            <person name="Pierce E.L."/>
            <person name="Paw B.H."/>
            <person name="Gilligan D.M."/>
            <person name="Drachman J.G."/>
        </authorList>
    </citation>
    <scope>SUBCELLULAR LOCATION</scope>
    <scope>CHARACTERIZATION OF VARIANT ASP-167</scope>
</reference>
<reference key="10">
    <citation type="journal article" date="2009" name="Mol. Biol. Cell">
        <title>The M phase kinase Greatwall (Gwl) promotes inactivation of PP2A/B55delta, a phosphatase directed against CDK phosphosites.</title>
        <authorList>
            <person name="Castilho P.V."/>
            <person name="Williams B.C."/>
            <person name="Mochida S."/>
            <person name="Zhao Y."/>
            <person name="Goldberg M.L."/>
        </authorList>
    </citation>
    <scope>FUNCTION</scope>
</reference>
<reference key="11">
    <citation type="journal article" date="2009" name="Mol. Cell. Proteomics">
        <title>Large-scale proteomics analysis of the human kinome.</title>
        <authorList>
            <person name="Oppermann F.S."/>
            <person name="Gnad F."/>
            <person name="Olsen J.V."/>
            <person name="Hornberger R."/>
            <person name="Greff Z."/>
            <person name="Keri G."/>
            <person name="Mann M."/>
            <person name="Daub H."/>
        </authorList>
    </citation>
    <scope>IDENTIFICATION BY MASS SPECTROMETRY [LARGE SCALE ANALYSIS]</scope>
</reference>
<reference key="12">
    <citation type="journal article" date="2010" name="Cell Cycle">
        <title>MASTL is the human orthologue of Greatwall kinase that facilitates mitotic entry, anaphase and cytokinesis.</title>
        <authorList>
            <person name="Voets E."/>
            <person name="Wolthuis R.M.F."/>
        </authorList>
    </citation>
    <scope>FUNCTION</scope>
    <scope>SUBCELLULAR LOCATION</scope>
    <scope>PHOSPHORYLATION</scope>
</reference>
<reference key="13">
    <citation type="journal article" date="2010" name="Proc. Natl. Acad. Sci. U.S.A.">
        <title>Loss of human Greatwall results in G2 arrest and multiple mitotic defects due to deregulation of the cyclin B-Cdc2/PP2A balance.</title>
        <authorList>
            <person name="Burgess A."/>
            <person name="Vigneron S."/>
            <person name="Brioudes E."/>
            <person name="Labbe J.-C."/>
            <person name="Lorca T."/>
            <person name="Castro A."/>
        </authorList>
    </citation>
    <scope>FUNCTION</scope>
    <scope>SUBCELLULAR LOCATION</scope>
    <scope>PHOSPHORYLATION</scope>
</reference>
<reference key="14">
    <citation type="journal article" date="2010" name="Sci. Signal.">
        <title>Quantitative phosphoproteomics reveals widespread full phosphorylation site occupancy during mitosis.</title>
        <authorList>
            <person name="Olsen J.V."/>
            <person name="Vermeulen M."/>
            <person name="Santamaria A."/>
            <person name="Kumar C."/>
            <person name="Miller M.L."/>
            <person name="Jensen L.J."/>
            <person name="Gnad F."/>
            <person name="Cox J."/>
            <person name="Jensen T.S."/>
            <person name="Nigg E.A."/>
            <person name="Brunak S."/>
            <person name="Mann M."/>
        </authorList>
    </citation>
    <scope>PHOSPHORYLATION [LARGE SCALE ANALYSIS] AT THR-207; THR-222; SER-370; SER-631; SER-668; SER-875 AND SER-878</scope>
    <scope>IDENTIFICATION BY MASS SPECTROMETRY [LARGE SCALE ANALYSIS]</scope>
    <source>
        <tissue>Cervix carcinoma</tissue>
    </source>
</reference>
<reference key="15">
    <citation type="journal article" date="2010" name="Science">
        <title>The substrate of Greatwall kinase, Arpp19, controls mitosis by inhibiting protein phosphatase 2A.</title>
        <authorList>
            <person name="Gharbi-Ayachi A."/>
            <person name="Labbe J.C."/>
            <person name="Burgess A."/>
            <person name="Vigneron S."/>
            <person name="Strub J.M."/>
            <person name="Brioudes E."/>
            <person name="Van-Dorsselaer A."/>
            <person name="Castro A."/>
            <person name="Lorca T."/>
        </authorList>
    </citation>
    <scope>CATALYTIC ACTIVITY</scope>
    <scope>MUTAGENESIS OF LYS-72</scope>
</reference>
<reference key="16">
    <citation type="journal article" date="2011" name="BMC Syst. Biol.">
        <title>Initial characterization of the human central proteome.</title>
        <authorList>
            <person name="Burkard T.R."/>
            <person name="Planyavsky M."/>
            <person name="Kaupe I."/>
            <person name="Breitwieser F.P."/>
            <person name="Buerckstuemmer T."/>
            <person name="Bennett K.L."/>
            <person name="Superti-Furga G."/>
            <person name="Colinge J."/>
        </authorList>
    </citation>
    <scope>IDENTIFICATION BY MASS SPECTROMETRY [LARGE SCALE ANALYSIS]</scope>
</reference>
<reference key="17">
    <citation type="journal article" date="2012" name="Proc. Natl. Acad. Sci. U.S.A.">
        <title>N-terminal acetylome analyses and functional insights of the N-terminal acetyltransferase NatB.</title>
        <authorList>
            <person name="Van Damme P."/>
            <person name="Lasa M."/>
            <person name="Polevoda B."/>
            <person name="Gazquez C."/>
            <person name="Elosegui-Artola A."/>
            <person name="Kim D.S."/>
            <person name="De Juan-Pardo E."/>
            <person name="Demeyer K."/>
            <person name="Hole K."/>
            <person name="Larrea E."/>
            <person name="Timmerman E."/>
            <person name="Prieto J."/>
            <person name="Arnesen T."/>
            <person name="Sherman F."/>
            <person name="Gevaert K."/>
            <person name="Aldabe R."/>
        </authorList>
    </citation>
    <scope>ACETYLATION [LARGE SCALE ANALYSIS] AT MET-1</scope>
    <scope>IDENTIFICATION BY MASS SPECTROMETRY [LARGE SCALE ANALYSIS]</scope>
</reference>
<reference key="18">
    <citation type="journal article" date="2013" name="J. Proteome Res.">
        <title>Toward a comprehensive characterization of a human cancer cell phosphoproteome.</title>
        <authorList>
            <person name="Zhou H."/>
            <person name="Di Palma S."/>
            <person name="Preisinger C."/>
            <person name="Peng M."/>
            <person name="Polat A.N."/>
            <person name="Heck A.J."/>
            <person name="Mohammed S."/>
        </authorList>
    </citation>
    <scope>PHOSPHORYLATION [LARGE SCALE ANALYSIS] AT SER-370; SER-453; THR-519; SER-657 AND SER-878</scope>
    <scope>IDENTIFICATION BY MASS SPECTROMETRY [LARGE SCALE ANALYSIS]</scope>
    <source>
        <tissue>Cervix carcinoma</tissue>
        <tissue>Erythroleukemia</tissue>
    </source>
</reference>
<reference key="19">
    <citation type="journal article" date="2024" name="Nature">
        <title>Cryo-EM structures of PP2A:B55-FAM122A and PP2A:B55-ARPP19.</title>
        <authorList>
            <person name="Padi S.K.R."/>
            <person name="Vos M.R."/>
            <person name="Godek R.J."/>
            <person name="Fuller J.R."/>
            <person name="Kruse T."/>
            <person name="Hein J.B."/>
            <person name="Nilsson J."/>
            <person name="Kelker M.S."/>
            <person name="Page R."/>
            <person name="Peti W."/>
        </authorList>
    </citation>
    <scope>FUNCTION</scope>
    <scope>CATALYTIC ACTIVITY</scope>
</reference>
<reference key="20">
    <citation type="journal article" date="2003" name="Hum. Hered.">
        <title>FLJ14813 missense mutation: a candidate for autosomal dominant thrombocytopenia on human chromosome 10.</title>
        <authorList>
            <person name="Gandhi M.J."/>
            <person name="Cummings C.L."/>
            <person name="Drachman J.G."/>
        </authorList>
    </citation>
    <scope>VARIANT ASP-167</scope>
    <scope>FUNCTION</scope>
    <scope>POSSIBLE INVOLVEMENT IN THROMBOCYTOPENIA</scope>
</reference>
<reference key="21">
    <citation type="journal article" date="2007" name="Nature">
        <title>Patterns of somatic mutation in human cancer genomes.</title>
        <authorList>
            <person name="Greenman C."/>
            <person name="Stephens P."/>
            <person name="Smith R."/>
            <person name="Dalgliesh G.L."/>
            <person name="Hunter C."/>
            <person name="Bignell G."/>
            <person name="Davies H."/>
            <person name="Teague J."/>
            <person name="Butler A."/>
            <person name="Stevens C."/>
            <person name="Edkins S."/>
            <person name="O'Meara S."/>
            <person name="Vastrik I."/>
            <person name="Schmidt E.E."/>
            <person name="Avis T."/>
            <person name="Barthorpe S."/>
            <person name="Bhamra G."/>
            <person name="Buck G."/>
            <person name="Choudhury B."/>
            <person name="Clements J."/>
            <person name="Cole J."/>
            <person name="Dicks E."/>
            <person name="Forbes S."/>
            <person name="Gray K."/>
            <person name="Halliday K."/>
            <person name="Harrison R."/>
            <person name="Hills K."/>
            <person name="Hinton J."/>
            <person name="Jenkinson A."/>
            <person name="Jones D."/>
            <person name="Menzies A."/>
            <person name="Mironenko T."/>
            <person name="Perry J."/>
            <person name="Raine K."/>
            <person name="Richardson D."/>
            <person name="Shepherd R."/>
            <person name="Small A."/>
            <person name="Tofts C."/>
            <person name="Varian J."/>
            <person name="Webb T."/>
            <person name="West S."/>
            <person name="Widaa S."/>
            <person name="Yates A."/>
            <person name="Cahill D.P."/>
            <person name="Louis D.N."/>
            <person name="Goldstraw P."/>
            <person name="Nicholson A.G."/>
            <person name="Brasseur F."/>
            <person name="Looijenga L."/>
            <person name="Weber B.L."/>
            <person name="Chiew Y.-E."/>
            <person name="DeFazio A."/>
            <person name="Greaves M.F."/>
            <person name="Green A.R."/>
            <person name="Campbell P."/>
            <person name="Birney E."/>
            <person name="Easton D.F."/>
            <person name="Chenevix-Trench G."/>
            <person name="Tan M.-H."/>
            <person name="Khoo S.K."/>
            <person name="Teh B.T."/>
            <person name="Yuen S.T."/>
            <person name="Leung S.Y."/>
            <person name="Wooster R."/>
            <person name="Futreal P.A."/>
            <person name="Stratton M.R."/>
        </authorList>
    </citation>
    <scope>VARIANTS [LARGE SCALE ANALYSIS] LYS-337; ILE-610 AND ALA-620</scope>
</reference>
<evidence type="ECO:0000250" key="1"/>
<evidence type="ECO:0000255" key="2">
    <source>
        <dbReference type="PROSITE-ProRule" id="PRU00159"/>
    </source>
</evidence>
<evidence type="ECO:0000255" key="3">
    <source>
        <dbReference type="PROSITE-ProRule" id="PRU00618"/>
    </source>
</evidence>
<evidence type="ECO:0000255" key="4">
    <source>
        <dbReference type="PROSITE-ProRule" id="PRU10027"/>
    </source>
</evidence>
<evidence type="ECO:0000256" key="5">
    <source>
        <dbReference type="SAM" id="MobiDB-lite"/>
    </source>
</evidence>
<evidence type="ECO:0000269" key="6">
    <source>
    </source>
</evidence>
<evidence type="ECO:0000269" key="7">
    <source>
    </source>
</evidence>
<evidence type="ECO:0000269" key="8">
    <source>
    </source>
</evidence>
<evidence type="ECO:0000269" key="9">
    <source>
    </source>
</evidence>
<evidence type="ECO:0000269" key="10">
    <source>
    </source>
</evidence>
<evidence type="ECO:0000269" key="11">
    <source>
    </source>
</evidence>
<evidence type="ECO:0000269" key="12">
    <source>
    </source>
</evidence>
<evidence type="ECO:0000269" key="13">
    <source>
    </source>
</evidence>
<evidence type="ECO:0000269" key="14">
    <source>
    </source>
</evidence>
<evidence type="ECO:0000303" key="15">
    <source>
    </source>
</evidence>
<evidence type="ECO:0000305" key="16"/>
<evidence type="ECO:0007744" key="17">
    <source>
    </source>
</evidence>
<evidence type="ECO:0007744" key="18">
    <source>
    </source>
</evidence>
<evidence type="ECO:0007744" key="19">
    <source>
    </source>
</evidence>
<evidence type="ECO:0007744" key="20">
    <source>
    </source>
</evidence>
<evidence type="ECO:0007744" key="21">
    <source>
    </source>
</evidence>
<evidence type="ECO:0007744" key="22">
    <source>
    </source>
</evidence>
<evidence type="ECO:0007744" key="23">
    <source>
    </source>
</evidence>
<evidence type="ECO:0007829" key="24">
    <source>
        <dbReference type="PDB" id="5LOH"/>
    </source>
</evidence>
<comment type="function">
    <text evidence="6 9 10 11 12 14">Serine/threonine kinase that plays a key role in M phase by acting as a regulator of mitosis entry and maintenance (PubMed:19680222). Acts by promoting the inactivation of protein phosphatase 2A (PP2A) during M phase: does not directly inhibit PP2A but acts by mediating phosphorylation and subsequent activation of ARPP19 and ENSA at 'Ser-62' and 'Ser-67', respectively (PubMed:38123684). ARPP19 and ENSA are phosphatase inhibitors that specifically inhibit the PPP2R2D (PR55-delta) subunit of PP2A. Inactivation of PP2A during M phase is essential to keep cyclin-B1-CDK1 activity high (PubMed:20818157). Following DNA damage, it is also involved in checkpoint recovery by being inhibited. Phosphorylates histone protein in vitro; however such activity is unsure in vivo. May be involved in megakaryocyte differentiation.</text>
</comment>
<comment type="catalytic activity">
    <reaction evidence="13 14">
        <text>L-seryl-[protein] + ATP = O-phospho-L-seryl-[protein] + ADP + H(+)</text>
        <dbReference type="Rhea" id="RHEA:17989"/>
        <dbReference type="Rhea" id="RHEA-COMP:9863"/>
        <dbReference type="Rhea" id="RHEA-COMP:11604"/>
        <dbReference type="ChEBI" id="CHEBI:15378"/>
        <dbReference type="ChEBI" id="CHEBI:29999"/>
        <dbReference type="ChEBI" id="CHEBI:30616"/>
        <dbReference type="ChEBI" id="CHEBI:83421"/>
        <dbReference type="ChEBI" id="CHEBI:456216"/>
        <dbReference type="EC" id="2.7.11.1"/>
    </reaction>
</comment>
<comment type="catalytic activity">
    <reaction evidence="13">
        <text>L-threonyl-[protein] + ATP = O-phospho-L-threonyl-[protein] + ADP + H(+)</text>
        <dbReference type="Rhea" id="RHEA:46608"/>
        <dbReference type="Rhea" id="RHEA-COMP:11060"/>
        <dbReference type="Rhea" id="RHEA-COMP:11605"/>
        <dbReference type="ChEBI" id="CHEBI:15378"/>
        <dbReference type="ChEBI" id="CHEBI:30013"/>
        <dbReference type="ChEBI" id="CHEBI:30616"/>
        <dbReference type="ChEBI" id="CHEBI:61977"/>
        <dbReference type="ChEBI" id="CHEBI:456216"/>
        <dbReference type="EC" id="2.7.11.1"/>
    </reaction>
</comment>
<comment type="subcellular location">
    <subcellularLocation>
        <location evidence="12">Cytoplasm</location>
        <location evidence="12">Cytoskeleton</location>
        <location evidence="12">Microtubule organizing center</location>
        <location evidence="12">Centrosome</location>
    </subcellularLocation>
    <subcellularLocation>
        <location evidence="8 12">Nucleus</location>
    </subcellularLocation>
    <subcellularLocation>
        <location evidence="12">Cleavage furrow</location>
    </subcellularLocation>
    <text evidence="12">During interphase is mainly nuclear, upon nuclear envelope breakdown localizes at the cytoplasm and during mitosis at the centrosomes. Upon mitotic exit moves to the cleavage furrow.</text>
</comment>
<comment type="alternative products">
    <event type="alternative splicing"/>
    <isoform>
        <id>Q96GX5-1</id>
        <name>1</name>
        <sequence type="displayed"/>
    </isoform>
    <isoform>
        <id>Q96GX5-2</id>
        <name>2</name>
        <sequence type="described" ref="VSP_014574 VSP_014575"/>
    </isoform>
    <isoform>
        <id>Q96GX5-3</id>
        <name>3</name>
        <sequence type="described" ref="VSP_014574"/>
    </isoform>
</comment>
<comment type="PTM">
    <text evidence="1 11 12">Phosphorylation at Thr-741 by CDK1 during M phase activates its kinase activity (By similarity). Maximum phosphorylation occurs in prometaphase.</text>
</comment>
<comment type="disease">
    <text evidence="6">Defects in MASTL may play a role in the pathogenesis of thrombocytopenia, a disorder defined by reduced number of platelets in circulating blood, resulting in the potential for increased bleeding and decreased ability for clotting.</text>
</comment>
<comment type="miscellaneous">
    <text>Reduced levels of MASTL by RNAi causes mitotic abnormalities that consist of delay in G(2) phase and slow chromosome condensation. Cells that enter and progress through mitosis often fail to completely separate their sister chromatids in anaphase leading to the formation of 4N G(1) cells subsequent to failure of cytokinesis (PubMed:20538976, PubMed:20818157).</text>
</comment>
<comment type="similarity">
    <text evidence="16">Belongs to the protein kinase superfamily. AGC Ser/Thr protein kinase family.</text>
</comment>
<proteinExistence type="evidence at protein level"/>
<accession>Q96GX5</accession>
<accession>Q5T8D5</accession>
<accession>Q5T8D7</accession>
<accession>Q8NCD6</accession>
<accession>Q96SJ5</accession>